<proteinExistence type="inferred from homology"/>
<keyword id="KW-0240">DNA-directed RNA polymerase</keyword>
<keyword id="KW-0548">Nucleotidyltransferase</keyword>
<keyword id="KW-0804">Transcription</keyword>
<keyword id="KW-0808">Transferase</keyword>
<evidence type="ECO:0000255" key="1">
    <source>
        <dbReference type="HAMAP-Rule" id="MF_01321"/>
    </source>
</evidence>
<evidence type="ECO:0000256" key="2">
    <source>
        <dbReference type="SAM" id="MobiDB-lite"/>
    </source>
</evidence>
<sequence length="1203" mass="134362">MAGHDVQYGKHRTRRSFSRIKEVLDLPNLIEIQTDSFKAFLDHGLKEVFEDVLPISNFTDTMELEFVGYEIKEPKYTLEEARIHDASYSAPIFVTFRLINKETSEIKTQEVFFGDFPIMTEMGTFIINGGERIIVSQLVRSPGVYFNDKVDKNGKVGYGSTVIPNRGAWLELESDSKDITYTRIDRTRKIPFTTLVRALGFSGDDEIFDIFGDSELVRNTVEKDIHKNPMDSRTDEALKEIYERLRPGEPKTAESSRSLLVARFFDPRRYDLAAVGRYKINKKLNVKTRLLNQTIAEPLVDPETGEILVEAGTIMTRSVIESIESHLDGDLNKIVYIPNDAAVVTEPVVLQKFKVIAPTDPDRVVTIIGNANPDDKVRTVTPADILAEMSYFLNLAEGLGRVDDIDHLGNRRIRAVGELLANQVRLGLSRMERNVRERMSVQDNEVLTPQQIINIRPVTAAVKEFFGSSQLSQFMDQHNPLSELSHKRRLSALGPGGLTRDRAGYEVRDVHYTHYGRMCPIETPEGPNIGLINNLSSYGHLNKYGFVQTPYRKVDRETGVVTNEIVWLTADEEDEYTVAQANSRLNEDGTFAEKIVMGRHQGVNQEYPANIVDYMDVSPKQVVAVATACIPFLENDDSNRALMGANMQRQAVPLINPQAPYVGTGMEYQAAHDSGAAVIAQYDGKVTYADADKVEVRREDGSLDVYHIQKFRRSNSGTAYNQRTLVKVGDVVEKGDFIADGPSMENGEMALGQNPIVAYMTWEGYNFEDAVIMSERLVKDDVYTSVHLEEYESETRDTKLGPEEITREIPNVGEDALKDLDEMGIIRIGAEVKEGDILVGKVTPKGEKDLSAEERLLHAIFGDKSREVRDTSLRVPHGADGVVRDVKIFTRVNGDELQSGVNMLVRVYIAQKRKIKVGDKMAGRHGNKGVVSRIVPVEDMPYLPDGTPVDIMLNPLGVPSRMNIGQVMELHLGMAARTLGIHIATPVFDGASSEDLWSTVKEAGMDSDAKTILYDGRTGEPFDNRVSVGVMYMIKLHHMVDDKLHARSVGPYSTVTQQPLGGKAQFGGQRFGEMEVWALEAYGASNVLQEILTYKSDDINGRLKAYEAITKGKPIPKPGVPESFRVLVKELQSLGLDMRVLDEDDQEVELRDLDEGMDEDVIHVDDLEKAREKAAQEAKAAFEAEEAEKATKAEATEEAAEQE</sequence>
<name>RPOB_STRZJ</name>
<protein>
    <recommendedName>
        <fullName evidence="1">DNA-directed RNA polymerase subunit beta</fullName>
        <shortName evidence="1">RNAP subunit beta</shortName>
        <ecNumber evidence="1">2.7.7.6</ecNumber>
    </recommendedName>
    <alternativeName>
        <fullName evidence="1">RNA polymerase subunit beta</fullName>
    </alternativeName>
    <alternativeName>
        <fullName evidence="1">Transcriptase subunit beta</fullName>
    </alternativeName>
</protein>
<feature type="chain" id="PRO_1000165827" description="DNA-directed RNA polymerase subunit beta">
    <location>
        <begin position="1"/>
        <end position="1203"/>
    </location>
</feature>
<feature type="region of interest" description="Disordered" evidence="2">
    <location>
        <begin position="1174"/>
        <end position="1203"/>
    </location>
</feature>
<feature type="compositionally biased region" description="Basic and acidic residues" evidence="2">
    <location>
        <begin position="1174"/>
        <end position="1195"/>
    </location>
</feature>
<gene>
    <name evidence="1" type="primary">rpoB</name>
    <name type="ordered locus">SPJ_1954</name>
</gene>
<reference key="1">
    <citation type="journal article" date="2010" name="Genome Biol.">
        <title>Structure and dynamics of the pan-genome of Streptococcus pneumoniae and closely related species.</title>
        <authorList>
            <person name="Donati C."/>
            <person name="Hiller N.L."/>
            <person name="Tettelin H."/>
            <person name="Muzzi A."/>
            <person name="Croucher N.J."/>
            <person name="Angiuoli S.V."/>
            <person name="Oggioni M."/>
            <person name="Dunning Hotopp J.C."/>
            <person name="Hu F.Z."/>
            <person name="Riley D.R."/>
            <person name="Covacci A."/>
            <person name="Mitchell T.J."/>
            <person name="Bentley S.D."/>
            <person name="Kilian M."/>
            <person name="Ehrlich G.D."/>
            <person name="Rappuoli R."/>
            <person name="Moxon E.R."/>
            <person name="Masignani V."/>
        </authorList>
    </citation>
    <scope>NUCLEOTIDE SEQUENCE [LARGE SCALE GENOMIC DNA]</scope>
    <source>
        <strain>JJA</strain>
    </source>
</reference>
<dbReference type="EC" id="2.7.7.6" evidence="1"/>
<dbReference type="EMBL" id="CP000919">
    <property type="protein sequence ID" value="ACO18376.1"/>
    <property type="molecule type" value="Genomic_DNA"/>
</dbReference>
<dbReference type="RefSeq" id="WP_000907151.1">
    <property type="nucleotide sequence ID" value="NC_012466.1"/>
</dbReference>
<dbReference type="SMR" id="C1CGP4"/>
<dbReference type="KEGG" id="sjj:SPJ_1954"/>
<dbReference type="HOGENOM" id="CLU_000524_4_1_9"/>
<dbReference type="Proteomes" id="UP000002206">
    <property type="component" value="Chromosome"/>
</dbReference>
<dbReference type="GO" id="GO:0000428">
    <property type="term" value="C:DNA-directed RNA polymerase complex"/>
    <property type="evidence" value="ECO:0007669"/>
    <property type="project" value="UniProtKB-KW"/>
</dbReference>
<dbReference type="GO" id="GO:0003677">
    <property type="term" value="F:DNA binding"/>
    <property type="evidence" value="ECO:0007669"/>
    <property type="project" value="UniProtKB-UniRule"/>
</dbReference>
<dbReference type="GO" id="GO:0003899">
    <property type="term" value="F:DNA-directed RNA polymerase activity"/>
    <property type="evidence" value="ECO:0007669"/>
    <property type="project" value="UniProtKB-UniRule"/>
</dbReference>
<dbReference type="GO" id="GO:0032549">
    <property type="term" value="F:ribonucleoside binding"/>
    <property type="evidence" value="ECO:0007669"/>
    <property type="project" value="InterPro"/>
</dbReference>
<dbReference type="GO" id="GO:0006351">
    <property type="term" value="P:DNA-templated transcription"/>
    <property type="evidence" value="ECO:0007669"/>
    <property type="project" value="UniProtKB-UniRule"/>
</dbReference>
<dbReference type="CDD" id="cd00653">
    <property type="entry name" value="RNA_pol_B_RPB2"/>
    <property type="match status" value="1"/>
</dbReference>
<dbReference type="Gene3D" id="2.40.50.100">
    <property type="match status" value="1"/>
</dbReference>
<dbReference type="Gene3D" id="2.40.50.150">
    <property type="match status" value="1"/>
</dbReference>
<dbReference type="Gene3D" id="3.90.1100.10">
    <property type="match status" value="2"/>
</dbReference>
<dbReference type="Gene3D" id="2.30.150.10">
    <property type="entry name" value="DNA-directed RNA polymerase, beta subunit, external 1 domain"/>
    <property type="match status" value="1"/>
</dbReference>
<dbReference type="Gene3D" id="2.40.270.10">
    <property type="entry name" value="DNA-directed RNA polymerase, subunit 2, domain 6"/>
    <property type="match status" value="2"/>
</dbReference>
<dbReference type="Gene3D" id="3.90.1800.10">
    <property type="entry name" value="RNA polymerase alpha subunit dimerisation domain"/>
    <property type="match status" value="1"/>
</dbReference>
<dbReference type="Gene3D" id="3.90.1110.10">
    <property type="entry name" value="RNA polymerase Rpb2, domain 2"/>
    <property type="match status" value="2"/>
</dbReference>
<dbReference type="HAMAP" id="MF_01321">
    <property type="entry name" value="RNApol_bact_RpoB"/>
    <property type="match status" value="1"/>
</dbReference>
<dbReference type="InterPro" id="IPR042107">
    <property type="entry name" value="DNA-dir_RNA_pol_bsu_ext_1_sf"/>
</dbReference>
<dbReference type="InterPro" id="IPR019462">
    <property type="entry name" value="DNA-dir_RNA_pol_bsu_external_1"/>
</dbReference>
<dbReference type="InterPro" id="IPR015712">
    <property type="entry name" value="DNA-dir_RNA_pol_su2"/>
</dbReference>
<dbReference type="InterPro" id="IPR007120">
    <property type="entry name" value="DNA-dir_RNAP_su2_dom"/>
</dbReference>
<dbReference type="InterPro" id="IPR037033">
    <property type="entry name" value="DNA-dir_RNAP_su2_hyb_sf"/>
</dbReference>
<dbReference type="InterPro" id="IPR010243">
    <property type="entry name" value="RNA_pol_bsu_bac"/>
</dbReference>
<dbReference type="InterPro" id="IPR007121">
    <property type="entry name" value="RNA_pol_bsu_CS"/>
</dbReference>
<dbReference type="InterPro" id="IPR007644">
    <property type="entry name" value="RNA_pol_bsu_protrusion"/>
</dbReference>
<dbReference type="InterPro" id="IPR007642">
    <property type="entry name" value="RNA_pol_Rpb2_2"/>
</dbReference>
<dbReference type="InterPro" id="IPR037034">
    <property type="entry name" value="RNA_pol_Rpb2_2_sf"/>
</dbReference>
<dbReference type="InterPro" id="IPR007645">
    <property type="entry name" value="RNA_pol_Rpb2_3"/>
</dbReference>
<dbReference type="InterPro" id="IPR007641">
    <property type="entry name" value="RNA_pol_Rpb2_7"/>
</dbReference>
<dbReference type="InterPro" id="IPR014724">
    <property type="entry name" value="RNA_pol_RPB2_OB-fold"/>
</dbReference>
<dbReference type="NCBIfam" id="NF001616">
    <property type="entry name" value="PRK00405.1"/>
    <property type="match status" value="1"/>
</dbReference>
<dbReference type="NCBIfam" id="TIGR02013">
    <property type="entry name" value="rpoB"/>
    <property type="match status" value="1"/>
</dbReference>
<dbReference type="PANTHER" id="PTHR20856">
    <property type="entry name" value="DNA-DIRECTED RNA POLYMERASE I SUBUNIT 2"/>
    <property type="match status" value="1"/>
</dbReference>
<dbReference type="Pfam" id="PF04563">
    <property type="entry name" value="RNA_pol_Rpb2_1"/>
    <property type="match status" value="1"/>
</dbReference>
<dbReference type="Pfam" id="PF04561">
    <property type="entry name" value="RNA_pol_Rpb2_2"/>
    <property type="match status" value="2"/>
</dbReference>
<dbReference type="Pfam" id="PF04565">
    <property type="entry name" value="RNA_pol_Rpb2_3"/>
    <property type="match status" value="1"/>
</dbReference>
<dbReference type="Pfam" id="PF10385">
    <property type="entry name" value="RNA_pol_Rpb2_45"/>
    <property type="match status" value="1"/>
</dbReference>
<dbReference type="Pfam" id="PF00562">
    <property type="entry name" value="RNA_pol_Rpb2_6"/>
    <property type="match status" value="1"/>
</dbReference>
<dbReference type="Pfam" id="PF04560">
    <property type="entry name" value="RNA_pol_Rpb2_7"/>
    <property type="match status" value="1"/>
</dbReference>
<dbReference type="SUPFAM" id="SSF64484">
    <property type="entry name" value="beta and beta-prime subunits of DNA dependent RNA-polymerase"/>
    <property type="match status" value="1"/>
</dbReference>
<dbReference type="PROSITE" id="PS01166">
    <property type="entry name" value="RNA_POL_BETA"/>
    <property type="match status" value="1"/>
</dbReference>
<comment type="function">
    <text evidence="1">DNA-dependent RNA polymerase catalyzes the transcription of DNA into RNA using the four ribonucleoside triphosphates as substrates.</text>
</comment>
<comment type="catalytic activity">
    <reaction evidence="1">
        <text>RNA(n) + a ribonucleoside 5'-triphosphate = RNA(n+1) + diphosphate</text>
        <dbReference type="Rhea" id="RHEA:21248"/>
        <dbReference type="Rhea" id="RHEA-COMP:14527"/>
        <dbReference type="Rhea" id="RHEA-COMP:17342"/>
        <dbReference type="ChEBI" id="CHEBI:33019"/>
        <dbReference type="ChEBI" id="CHEBI:61557"/>
        <dbReference type="ChEBI" id="CHEBI:140395"/>
        <dbReference type="EC" id="2.7.7.6"/>
    </reaction>
</comment>
<comment type="subunit">
    <text evidence="1">The RNAP catalytic core consists of 2 alpha, 1 beta, 1 beta' and 1 omega subunit. When a sigma factor is associated with the core the holoenzyme is formed, which can initiate transcription.</text>
</comment>
<comment type="similarity">
    <text evidence="1">Belongs to the RNA polymerase beta chain family.</text>
</comment>
<organism>
    <name type="scientific">Streptococcus pneumoniae (strain JJA)</name>
    <dbReference type="NCBI Taxonomy" id="488222"/>
    <lineage>
        <taxon>Bacteria</taxon>
        <taxon>Bacillati</taxon>
        <taxon>Bacillota</taxon>
        <taxon>Bacilli</taxon>
        <taxon>Lactobacillales</taxon>
        <taxon>Streptococcaceae</taxon>
        <taxon>Streptococcus</taxon>
    </lineage>
</organism>
<accession>C1CGP4</accession>